<protein>
    <recommendedName>
        <fullName>Beta-lactamase</fullName>
        <ecNumber>3.5.2.6</ecNumber>
    </recommendedName>
    <alternativeName>
        <fullName>Penicillinase</fullName>
    </alternativeName>
</protein>
<comment type="catalytic activity">
    <reaction evidence="2">
        <text>a beta-lactam + H2O = a substituted beta-amino acid</text>
        <dbReference type="Rhea" id="RHEA:20401"/>
        <dbReference type="ChEBI" id="CHEBI:15377"/>
        <dbReference type="ChEBI" id="CHEBI:35627"/>
        <dbReference type="ChEBI" id="CHEBI:140347"/>
        <dbReference type="EC" id="3.5.2.6"/>
    </reaction>
</comment>
<comment type="PTM">
    <text>Predicted to be exported by the Tat system. The position of the signal peptide cleavage has been experimentally proven.</text>
</comment>
<comment type="miscellaneous">
    <text evidence="6">The class A beta-lactamase family has a specific amino-acid numbering system, sometimes called Ambler or ABL numbering and often misspelt as Amber. A multiple sequence alignment was used to derive a consensus sequence and then the consensus was numbered taking into account insertions and deletions. This allows use of identical numbers, e.g. for active site residues, despite differences in protein length. UniProt always uses natural numbering of residues, hence there appear to be differences in numbering between this entry and some papers.</text>
</comment>
<comment type="similarity">
    <text evidence="5">Belongs to the class-A beta-lactamase family.</text>
</comment>
<name>BLAC_STRAL</name>
<organism>
    <name type="scientific">Streptomyces albus G</name>
    <dbReference type="NCBI Taxonomy" id="1962"/>
    <lineage>
        <taxon>Bacteria</taxon>
        <taxon>Bacillati</taxon>
        <taxon>Actinomycetota</taxon>
        <taxon>Actinomycetes</taxon>
        <taxon>Kitasatosporales</taxon>
        <taxon>Streptomycetaceae</taxon>
        <taxon>Streptomyces</taxon>
    </lineage>
</organism>
<feature type="signal peptide" description="Tat-type signal">
    <location>
        <begin position="1"/>
        <end position="39"/>
    </location>
</feature>
<feature type="chain" id="PRO_0000017012" description="Beta-lactamase">
    <location>
        <begin position="40"/>
        <end position="314"/>
    </location>
</feature>
<feature type="region of interest" description="Disordered" evidence="3">
    <location>
        <begin position="31"/>
        <end position="50"/>
    </location>
</feature>
<feature type="active site" description="Acyl-ester intermediate" evidence="2 4">
    <location>
        <position position="89"/>
    </location>
</feature>
<feature type="binding site" evidence="1">
    <location>
        <begin position="259"/>
        <end position="261"/>
    </location>
    <ligand>
        <name>substrate</name>
    </ligand>
</feature>
<feature type="helix" evidence="7">
    <location>
        <begin position="48"/>
        <end position="60"/>
    </location>
</feature>
<feature type="strand" evidence="7">
    <location>
        <begin position="62"/>
        <end position="70"/>
    </location>
</feature>
<feature type="turn" evidence="7">
    <location>
        <begin position="71"/>
        <end position="73"/>
    </location>
</feature>
<feature type="strand" evidence="7">
    <location>
        <begin position="76"/>
        <end position="80"/>
    </location>
</feature>
<feature type="helix" evidence="7">
    <location>
        <begin position="88"/>
        <end position="91"/>
    </location>
</feature>
<feature type="helix" evidence="7">
    <location>
        <begin position="92"/>
        <end position="102"/>
    </location>
</feature>
<feature type="strand" evidence="7">
    <location>
        <begin position="105"/>
        <end position="107"/>
    </location>
</feature>
<feature type="turn" evidence="7">
    <location>
        <begin position="108"/>
        <end position="111"/>
    </location>
</feature>
<feature type="helix" evidence="7">
    <location>
        <begin position="118"/>
        <end position="124"/>
    </location>
</feature>
<feature type="turn" evidence="7">
    <location>
        <begin position="129"/>
        <end position="132"/>
    </location>
</feature>
<feature type="helix" evidence="7">
    <location>
        <begin position="134"/>
        <end position="139"/>
    </location>
</feature>
<feature type="helix" evidence="7">
    <location>
        <begin position="144"/>
        <end position="153"/>
    </location>
</feature>
<feature type="helix" evidence="7">
    <location>
        <begin position="157"/>
        <end position="167"/>
    </location>
</feature>
<feature type="helix" evidence="7">
    <location>
        <begin position="171"/>
        <end position="179"/>
    </location>
</feature>
<feature type="helix" evidence="7">
    <location>
        <begin position="193"/>
        <end position="195"/>
    </location>
</feature>
<feature type="helix" evidence="7">
    <location>
        <begin position="208"/>
        <end position="219"/>
    </location>
</feature>
<feature type="strand" evidence="7">
    <location>
        <begin position="221"/>
        <end position="224"/>
    </location>
</feature>
<feature type="helix" evidence="7">
    <location>
        <begin position="226"/>
        <end position="237"/>
    </location>
</feature>
<feature type="turn" evidence="7">
    <location>
        <begin position="243"/>
        <end position="245"/>
    </location>
</feature>
<feature type="helix" evidence="7">
    <location>
        <begin position="246"/>
        <end position="249"/>
    </location>
</feature>
<feature type="strand" evidence="7">
    <location>
        <begin position="254"/>
        <end position="262"/>
    </location>
</feature>
<feature type="strand" evidence="7">
    <location>
        <begin position="268"/>
        <end position="275"/>
    </location>
</feature>
<feature type="strand" evidence="7">
    <location>
        <begin position="282"/>
        <end position="289"/>
    </location>
</feature>
<feature type="helix" evidence="7">
    <location>
        <begin position="299"/>
        <end position="312"/>
    </location>
</feature>
<evidence type="ECO:0000250" key="1"/>
<evidence type="ECO:0000255" key="2">
    <source>
        <dbReference type="PROSITE-ProRule" id="PRU10101"/>
    </source>
</evidence>
<evidence type="ECO:0000256" key="3">
    <source>
        <dbReference type="SAM" id="MobiDB-lite"/>
    </source>
</evidence>
<evidence type="ECO:0000269" key="4">
    <source>
    </source>
</evidence>
<evidence type="ECO:0000305" key="5"/>
<evidence type="ECO:0000305" key="6">
    <source>
    </source>
</evidence>
<evidence type="ECO:0007829" key="7">
    <source>
        <dbReference type="PDB" id="1BSG"/>
    </source>
</evidence>
<sequence length="314" mass="33265">MHPSTSRPSRRTLLTATAGAALAAATLVPGTAHASSGGRGHGSGSVSDAERRLAGLERASGARLGVYAYDTGSGRTVAYRADELFPMCSVFKTLSSAAVLRDLDRNGEFLSRRILYTQDDVEQADGAGPETGKPQNLANAQLTVEELCEVSITASDNCAANLMLRELGGPAAVTRFVRSLGDRVTRLDRWEPELNSAEPGRVTDTTSPRAITRTYGRLVLGDALNPRDRRLLTSWLLANTTSGDRFRAGLPDDWTLGDKTGAGRYGTNNDAGVTWPPGRAPIVLTVLTAKTEQDAARDDGLVADAARVLAETLG</sequence>
<keyword id="KW-0002">3D-structure</keyword>
<keyword id="KW-0046">Antibiotic resistance</keyword>
<keyword id="KW-0903">Direct protein sequencing</keyword>
<keyword id="KW-0378">Hydrolase</keyword>
<keyword id="KW-0732">Signal</keyword>
<dbReference type="EC" id="3.5.2.6"/>
<dbReference type="EMBL" id="M28303">
    <property type="protein sequence ID" value="AAA26775.1"/>
    <property type="molecule type" value="Genomic_DNA"/>
</dbReference>
<dbReference type="PIR" id="S00057">
    <property type="entry name" value="PNSM1U"/>
</dbReference>
<dbReference type="PDB" id="1BSG">
    <property type="method" value="X-ray"/>
    <property type="resolution" value="1.85 A"/>
    <property type="chains" value="A=47-314"/>
</dbReference>
<dbReference type="PDBsum" id="1BSG"/>
<dbReference type="SMR" id="P14559"/>
<dbReference type="CARD" id="ARO:3003564">
    <property type="molecule name" value="EXO-1"/>
    <property type="mechanism identifier" value="ARO:0001004"/>
    <property type="mechanism name" value="antibiotic inactivation"/>
</dbReference>
<dbReference type="EvolutionaryTrace" id="P14559"/>
<dbReference type="GO" id="GO:0008800">
    <property type="term" value="F:beta-lactamase activity"/>
    <property type="evidence" value="ECO:0007669"/>
    <property type="project" value="UniProtKB-EC"/>
</dbReference>
<dbReference type="GO" id="GO:0030655">
    <property type="term" value="P:beta-lactam antibiotic catabolic process"/>
    <property type="evidence" value="ECO:0007669"/>
    <property type="project" value="InterPro"/>
</dbReference>
<dbReference type="GO" id="GO:0046677">
    <property type="term" value="P:response to antibiotic"/>
    <property type="evidence" value="ECO:0007669"/>
    <property type="project" value="UniProtKB-KW"/>
</dbReference>
<dbReference type="Gene3D" id="3.40.710.10">
    <property type="entry name" value="DD-peptidase/beta-lactamase superfamily"/>
    <property type="match status" value="1"/>
</dbReference>
<dbReference type="InterPro" id="IPR012338">
    <property type="entry name" value="Beta-lactam/transpept-like"/>
</dbReference>
<dbReference type="InterPro" id="IPR045155">
    <property type="entry name" value="Beta-lactam_cat"/>
</dbReference>
<dbReference type="InterPro" id="IPR000871">
    <property type="entry name" value="Beta-lactam_class-A"/>
</dbReference>
<dbReference type="InterPro" id="IPR023650">
    <property type="entry name" value="Beta-lactam_class-A_AS"/>
</dbReference>
<dbReference type="InterPro" id="IPR006311">
    <property type="entry name" value="TAT_signal"/>
</dbReference>
<dbReference type="NCBIfam" id="NF033103">
    <property type="entry name" value="bla_class_A"/>
    <property type="match status" value="1"/>
</dbReference>
<dbReference type="NCBIfam" id="NF033099">
    <property type="entry name" value="bla_Exo"/>
    <property type="match status" value="1"/>
</dbReference>
<dbReference type="PANTHER" id="PTHR35333">
    <property type="entry name" value="BETA-LACTAMASE"/>
    <property type="match status" value="1"/>
</dbReference>
<dbReference type="PANTHER" id="PTHR35333:SF3">
    <property type="entry name" value="BETA-LACTAMASE-TYPE TRANSPEPTIDASE FOLD CONTAINING PROTEIN"/>
    <property type="match status" value="1"/>
</dbReference>
<dbReference type="Pfam" id="PF13354">
    <property type="entry name" value="Beta-lactamase2"/>
    <property type="match status" value="1"/>
</dbReference>
<dbReference type="PRINTS" id="PR00118">
    <property type="entry name" value="BLACTAMASEA"/>
</dbReference>
<dbReference type="SUPFAM" id="SSF56601">
    <property type="entry name" value="beta-lactamase/transpeptidase-like"/>
    <property type="match status" value="1"/>
</dbReference>
<dbReference type="PROSITE" id="PS00146">
    <property type="entry name" value="BETA_LACTAMASE_A"/>
    <property type="match status" value="1"/>
</dbReference>
<dbReference type="PROSITE" id="PS51318">
    <property type="entry name" value="TAT"/>
    <property type="match status" value="1"/>
</dbReference>
<proteinExistence type="evidence at protein level"/>
<accession>P14559</accession>
<reference key="1">
    <citation type="journal article" date="1987" name="Eur. J. Biochem.">
        <title>Nucleotide sequence of the gene encoding the Streptomyces albus G beta-lactamase precursor.</title>
        <authorList>
            <person name="Dehottay P."/>
            <person name="Dusart J."/>
            <person name="de Meester F."/>
            <person name="Joris B."/>
            <person name="van Beeumen J."/>
            <person name="Erpicum T."/>
            <person name="Frere J.-M."/>
            <person name="Ghuysen J.-M."/>
        </authorList>
    </citation>
    <scope>NUCLEOTIDE SEQUENCE [GENOMIC DNA]</scope>
    <scope>PARTIAL PROTEIN SEQUENCE</scope>
</reference>
<reference key="2">
    <citation type="journal article" date="1987" name="Biochem. J.">
        <title>The active sites of the beta-lactamases of Streptomyces cacaoi and Streptomyces albus G.</title>
        <authorList>
            <person name="de Meester F."/>
            <person name="Joris B."/>
            <person name="Lenzini M.V."/>
            <person name="Dehottay P."/>
            <person name="Erpicium T."/>
            <person name="Dusart J."/>
            <person name="Klein D."/>
            <person name="Ghuysen J.-M."/>
            <person name="Frere J.-M."/>
            <person name="van Beeumen J."/>
        </authorList>
    </citation>
    <scope>PROTEIN SEQUENCE OF 81-92</scope>
    <scope>ACTIVE SITE SER-89</scope>
</reference>
<reference key="3">
    <citation type="journal article" date="1991" name="Biochem. J.">
        <title>A standard numbering scheme for the class A beta-lactamases.</title>
        <authorList>
            <person name="Ambler R.P."/>
            <person name="Coulson A.F."/>
            <person name="Frere J.M."/>
            <person name="Ghuysen J.M."/>
            <person name="Joris B."/>
            <person name="Forsman M."/>
            <person name="Levesque R.C."/>
            <person name="Tiraby G."/>
            <person name="Waley S.G."/>
        </authorList>
    </citation>
    <scope>AMINO ACID NUMBERING SCHEME</scope>
</reference>
<reference key="4">
    <citation type="submission" date="1998-07" db="PDB data bank">
        <authorList>
            <person name="Fonze E."/>
            <person name="Charlier P."/>
            <person name="Dideberg O."/>
        </authorList>
    </citation>
    <scope>X-RAY CRYSTALLOGRAPHY (1.85 ANGSTROMS) OF 47-314</scope>
</reference>